<accession>Q6G2I3</accession>
<comment type="function">
    <text evidence="1">Bidirectionally degrades single-stranded DNA into large acid-insoluble oligonucleotides, which are then degraded further into small acid-soluble oligonucleotides.</text>
</comment>
<comment type="catalytic activity">
    <reaction evidence="1">
        <text>Exonucleolytic cleavage in either 5'- to 3'- or 3'- to 5'-direction to yield nucleoside 5'-phosphates.</text>
        <dbReference type="EC" id="3.1.11.6"/>
    </reaction>
</comment>
<comment type="subunit">
    <text evidence="1">Heterooligomer composed of large and small subunits.</text>
</comment>
<comment type="subcellular location">
    <subcellularLocation>
        <location evidence="1">Cytoplasm</location>
    </subcellularLocation>
</comment>
<comment type="similarity">
    <text evidence="1">Belongs to the XseA family.</text>
</comment>
<gene>
    <name evidence="1" type="primary">xseA</name>
    <name type="ordered locus">BH12220</name>
</gene>
<organism>
    <name type="scientific">Bartonella henselae (strain ATCC 49882 / DSM 28221 / CCUG 30454 / Houston 1)</name>
    <name type="common">Rochalimaea henselae</name>
    <dbReference type="NCBI Taxonomy" id="283166"/>
    <lineage>
        <taxon>Bacteria</taxon>
        <taxon>Pseudomonadati</taxon>
        <taxon>Pseudomonadota</taxon>
        <taxon>Alphaproteobacteria</taxon>
        <taxon>Hyphomicrobiales</taxon>
        <taxon>Bartonellaceae</taxon>
        <taxon>Bartonella</taxon>
    </lineage>
</organism>
<protein>
    <recommendedName>
        <fullName evidence="1">Exodeoxyribonuclease 7 large subunit</fullName>
        <ecNumber evidence="1">3.1.11.6</ecNumber>
    </recommendedName>
    <alternativeName>
        <fullName evidence="1">Exodeoxyribonuclease VII large subunit</fullName>
        <shortName evidence="1">Exonuclease VII large subunit</shortName>
    </alternativeName>
</protein>
<proteinExistence type="inferred from homology"/>
<reference key="1">
    <citation type="journal article" date="2004" name="Proc. Natl. Acad. Sci. U.S.A.">
        <title>The louse-borne human pathogen Bartonella quintana is a genomic derivative of the zoonotic agent Bartonella henselae.</title>
        <authorList>
            <person name="Alsmark U.C.M."/>
            <person name="Frank A.C."/>
            <person name="Karlberg E.O."/>
            <person name="Legault B.-A."/>
            <person name="Ardell D.H."/>
            <person name="Canbaeck B."/>
            <person name="Eriksson A.-S."/>
            <person name="Naeslund A.K."/>
            <person name="Handley S.A."/>
            <person name="Huvet M."/>
            <person name="La Scola B."/>
            <person name="Holmberg M."/>
            <person name="Andersson S.G.E."/>
        </authorList>
    </citation>
    <scope>NUCLEOTIDE SEQUENCE [LARGE SCALE GENOMIC DNA]</scope>
    <source>
        <strain>ATCC 49882 / DSM 28221 / CCUG 30454 / Houston 1</strain>
    </source>
</reference>
<keyword id="KW-0963">Cytoplasm</keyword>
<keyword id="KW-0269">Exonuclease</keyword>
<keyword id="KW-0378">Hydrolase</keyword>
<keyword id="KW-0540">Nuclease</keyword>
<evidence type="ECO:0000255" key="1">
    <source>
        <dbReference type="HAMAP-Rule" id="MF_00378"/>
    </source>
</evidence>
<sequence>MNLFFEKTGATNVAEFSVSEIAGALKRVVEEKFGYVRVRGEISGYRGAHASGHAYFALKDDKARLEAVIWRGIMEKLKFPPEEGMEVIAVGKLTTYPGSSKYQIVIEALEPTGVGALMTLLENRKKKFAEEGLFDEEKKKPLPYMPKIIGVVTSPTGAVIRDIIHRISDRFPLHILVWPVRVQGETSGREVAAAVKGFNVLPLEGLIPKPDLLIVARGGGSLEDLWGFNDEVVVRAVYESSLPVISAVGHETDWTLIDYVADWRAPTPTAAAEKAVPVKIDLEVYVVSLGARLRTGLARYFDFHQQKLRAIIRALPTADQLFALPRRGFDEISSRLERALCVSCDKKRLYFHTLAIRFTPRLLNTEKAQHSAKEYTARLHRAFVHIVEKQRAQLEIAFRLLKSTSYQNILERGFVLALGQNNKPIKRLAQIPEKEQINLRFFDGEISVITQESFFNRSSKSKRIKSKQDDQGTLF</sequence>
<dbReference type="EC" id="3.1.11.6" evidence="1"/>
<dbReference type="EMBL" id="BX897699">
    <property type="protein sequence ID" value="CAF28004.1"/>
    <property type="molecule type" value="Genomic_DNA"/>
</dbReference>
<dbReference type="SMR" id="Q6G2I3"/>
<dbReference type="PaxDb" id="283166-BH12220"/>
<dbReference type="EnsemblBacteria" id="CAF28004">
    <property type="protein sequence ID" value="CAF28004"/>
    <property type="gene ID" value="BH12220"/>
</dbReference>
<dbReference type="KEGG" id="bhe:BH12220"/>
<dbReference type="eggNOG" id="COG1570">
    <property type="taxonomic scope" value="Bacteria"/>
</dbReference>
<dbReference type="Proteomes" id="UP000000421">
    <property type="component" value="Chromosome"/>
</dbReference>
<dbReference type="GO" id="GO:0005737">
    <property type="term" value="C:cytoplasm"/>
    <property type="evidence" value="ECO:0007669"/>
    <property type="project" value="UniProtKB-SubCell"/>
</dbReference>
<dbReference type="GO" id="GO:0009318">
    <property type="term" value="C:exodeoxyribonuclease VII complex"/>
    <property type="evidence" value="ECO:0007669"/>
    <property type="project" value="InterPro"/>
</dbReference>
<dbReference type="GO" id="GO:0008855">
    <property type="term" value="F:exodeoxyribonuclease VII activity"/>
    <property type="evidence" value="ECO:0007669"/>
    <property type="project" value="UniProtKB-UniRule"/>
</dbReference>
<dbReference type="GO" id="GO:0003676">
    <property type="term" value="F:nucleic acid binding"/>
    <property type="evidence" value="ECO:0007669"/>
    <property type="project" value="InterPro"/>
</dbReference>
<dbReference type="GO" id="GO:0006308">
    <property type="term" value="P:DNA catabolic process"/>
    <property type="evidence" value="ECO:0007669"/>
    <property type="project" value="UniProtKB-UniRule"/>
</dbReference>
<dbReference type="CDD" id="cd04489">
    <property type="entry name" value="ExoVII_LU_OBF"/>
    <property type="match status" value="1"/>
</dbReference>
<dbReference type="HAMAP" id="MF_00378">
    <property type="entry name" value="Exonuc_7_L"/>
    <property type="match status" value="1"/>
</dbReference>
<dbReference type="InterPro" id="IPR003753">
    <property type="entry name" value="Exonuc_VII_L"/>
</dbReference>
<dbReference type="InterPro" id="IPR020579">
    <property type="entry name" value="Exonuc_VII_lsu_C"/>
</dbReference>
<dbReference type="InterPro" id="IPR025824">
    <property type="entry name" value="OB-fold_nuc-bd_dom"/>
</dbReference>
<dbReference type="NCBIfam" id="TIGR00237">
    <property type="entry name" value="xseA"/>
    <property type="match status" value="1"/>
</dbReference>
<dbReference type="PANTHER" id="PTHR30008">
    <property type="entry name" value="EXODEOXYRIBONUCLEASE 7 LARGE SUBUNIT"/>
    <property type="match status" value="1"/>
</dbReference>
<dbReference type="PANTHER" id="PTHR30008:SF0">
    <property type="entry name" value="EXODEOXYRIBONUCLEASE 7 LARGE SUBUNIT"/>
    <property type="match status" value="1"/>
</dbReference>
<dbReference type="Pfam" id="PF02601">
    <property type="entry name" value="Exonuc_VII_L"/>
    <property type="match status" value="1"/>
</dbReference>
<dbReference type="Pfam" id="PF13742">
    <property type="entry name" value="tRNA_anti_2"/>
    <property type="match status" value="1"/>
</dbReference>
<feature type="chain" id="PRO_1000122043" description="Exodeoxyribonuclease 7 large subunit">
    <location>
        <begin position="1"/>
        <end position="475"/>
    </location>
</feature>
<name>EX7L_BARHE</name>